<feature type="chain" id="PRO_0000119466" description="GTP cyclohydrolase 1">
    <location>
        <begin position="1"/>
        <end position="200"/>
    </location>
</feature>
<feature type="binding site" evidence="2">
    <location>
        <position position="87"/>
    </location>
    <ligand>
        <name>Zn(2+)</name>
        <dbReference type="ChEBI" id="CHEBI:29105"/>
    </ligand>
</feature>
<feature type="binding site" evidence="2">
    <location>
        <position position="90"/>
    </location>
    <ligand>
        <name>Zn(2+)</name>
        <dbReference type="ChEBI" id="CHEBI:29105"/>
    </ligand>
</feature>
<feature type="binding site" evidence="2">
    <location>
        <position position="158"/>
    </location>
    <ligand>
        <name>Zn(2+)</name>
        <dbReference type="ChEBI" id="CHEBI:29105"/>
    </ligand>
</feature>
<organism>
    <name type="scientific">Xanthomonas axonopodis pv. citri (strain 306)</name>
    <dbReference type="NCBI Taxonomy" id="190486"/>
    <lineage>
        <taxon>Bacteria</taxon>
        <taxon>Pseudomonadati</taxon>
        <taxon>Pseudomonadota</taxon>
        <taxon>Gammaproteobacteria</taxon>
        <taxon>Lysobacterales</taxon>
        <taxon>Lysobacteraceae</taxon>
        <taxon>Xanthomonas</taxon>
    </lineage>
</organism>
<sequence>MSQSNQPDSPVTQTQAEEAVRTLLRWAGEDPTREGLLDTPRRVAEAYGDWFSGYRDEPREYLERTFEEVAGYDELIVLRDISYESHCEHHMAPIIGKVHVGYLPRGKVVGISKLARVVESYARRFQVQEKMTAQIAQCIQDVLQPLGVGVVVEGAHECMTTRGIHKRGVSMVTSKMLGSFREDARTRAEFLQFIEVGGKR</sequence>
<keyword id="KW-0342">GTP-binding</keyword>
<keyword id="KW-0378">Hydrolase</keyword>
<keyword id="KW-0479">Metal-binding</keyword>
<keyword id="KW-0547">Nucleotide-binding</keyword>
<keyword id="KW-0554">One-carbon metabolism</keyword>
<keyword id="KW-0862">Zinc</keyword>
<reference key="1">
    <citation type="journal article" date="2002" name="Nature">
        <title>Comparison of the genomes of two Xanthomonas pathogens with differing host specificities.</title>
        <authorList>
            <person name="da Silva A.C.R."/>
            <person name="Ferro J.A."/>
            <person name="Reinach F.C."/>
            <person name="Farah C.S."/>
            <person name="Furlan L.R."/>
            <person name="Quaggio R.B."/>
            <person name="Monteiro-Vitorello C.B."/>
            <person name="Van Sluys M.A."/>
            <person name="Almeida N.F. Jr."/>
            <person name="Alves L.M.C."/>
            <person name="do Amaral A.M."/>
            <person name="Bertolini M.C."/>
            <person name="Camargo L.E.A."/>
            <person name="Camarotte G."/>
            <person name="Cannavan F."/>
            <person name="Cardozo J."/>
            <person name="Chambergo F."/>
            <person name="Ciapina L.P."/>
            <person name="Cicarelli R.M.B."/>
            <person name="Coutinho L.L."/>
            <person name="Cursino-Santos J.R."/>
            <person name="El-Dorry H."/>
            <person name="Faria J.B."/>
            <person name="Ferreira A.J.S."/>
            <person name="Ferreira R.C.C."/>
            <person name="Ferro M.I.T."/>
            <person name="Formighieri E.F."/>
            <person name="Franco M.C."/>
            <person name="Greggio C.C."/>
            <person name="Gruber A."/>
            <person name="Katsuyama A.M."/>
            <person name="Kishi L.T."/>
            <person name="Leite R.P."/>
            <person name="Lemos E.G.M."/>
            <person name="Lemos M.V.F."/>
            <person name="Locali E.C."/>
            <person name="Machado M.A."/>
            <person name="Madeira A.M.B.N."/>
            <person name="Martinez-Rossi N.M."/>
            <person name="Martins E.C."/>
            <person name="Meidanis J."/>
            <person name="Menck C.F.M."/>
            <person name="Miyaki C.Y."/>
            <person name="Moon D.H."/>
            <person name="Moreira L.M."/>
            <person name="Novo M.T.M."/>
            <person name="Okura V.K."/>
            <person name="Oliveira M.C."/>
            <person name="Oliveira V.R."/>
            <person name="Pereira H.A."/>
            <person name="Rossi A."/>
            <person name="Sena J.A.D."/>
            <person name="Silva C."/>
            <person name="de Souza R.F."/>
            <person name="Spinola L.A.F."/>
            <person name="Takita M.A."/>
            <person name="Tamura R.E."/>
            <person name="Teixeira E.C."/>
            <person name="Tezza R.I.D."/>
            <person name="Trindade dos Santos M."/>
            <person name="Truffi D."/>
            <person name="Tsai S.M."/>
            <person name="White F.F."/>
            <person name="Setubal J.C."/>
            <person name="Kitajima J.P."/>
        </authorList>
    </citation>
    <scope>NUCLEOTIDE SEQUENCE [LARGE SCALE GENOMIC DNA]</scope>
    <source>
        <strain>306</strain>
    </source>
</reference>
<name>GCH1_XANAC</name>
<evidence type="ECO:0000250" key="1"/>
<evidence type="ECO:0000255" key="2">
    <source>
        <dbReference type="HAMAP-Rule" id="MF_00223"/>
    </source>
</evidence>
<evidence type="ECO:0000305" key="3"/>
<comment type="catalytic activity">
    <reaction evidence="2">
        <text>GTP + H2O = 7,8-dihydroneopterin 3'-triphosphate + formate + H(+)</text>
        <dbReference type="Rhea" id="RHEA:17473"/>
        <dbReference type="ChEBI" id="CHEBI:15377"/>
        <dbReference type="ChEBI" id="CHEBI:15378"/>
        <dbReference type="ChEBI" id="CHEBI:15740"/>
        <dbReference type="ChEBI" id="CHEBI:37565"/>
        <dbReference type="ChEBI" id="CHEBI:58462"/>
        <dbReference type="EC" id="3.5.4.16"/>
    </reaction>
</comment>
<comment type="pathway">
    <text evidence="2">Cofactor biosynthesis; 7,8-dihydroneopterin triphosphate biosynthesis; 7,8-dihydroneopterin triphosphate from GTP: step 1/1.</text>
</comment>
<comment type="subunit">
    <text evidence="1">Toroid-shaped homodecamer, composed of two pentamers of five dimers.</text>
</comment>
<comment type="similarity">
    <text evidence="2">Belongs to the GTP cyclohydrolase I family.</text>
</comment>
<comment type="sequence caution" evidence="3">
    <conflict type="erroneous initiation">
        <sequence resource="EMBL-CDS" id="AAM39132"/>
    </conflict>
</comment>
<dbReference type="EC" id="3.5.4.16" evidence="2"/>
<dbReference type="EMBL" id="AE008923">
    <property type="protein sequence ID" value="AAM39132.1"/>
    <property type="status" value="ALT_INIT"/>
    <property type="molecule type" value="Genomic_DNA"/>
</dbReference>
<dbReference type="RefSeq" id="WP_003489347.1">
    <property type="nucleotide sequence ID" value="NC_003919.1"/>
</dbReference>
<dbReference type="SMR" id="Q8PEP3"/>
<dbReference type="GeneID" id="66913279"/>
<dbReference type="KEGG" id="xac:XAC4302"/>
<dbReference type="eggNOG" id="COG0302">
    <property type="taxonomic scope" value="Bacteria"/>
</dbReference>
<dbReference type="HOGENOM" id="CLU_049768_3_1_6"/>
<dbReference type="UniPathway" id="UPA00848">
    <property type="reaction ID" value="UER00151"/>
</dbReference>
<dbReference type="Proteomes" id="UP000000576">
    <property type="component" value="Chromosome"/>
</dbReference>
<dbReference type="GO" id="GO:0005737">
    <property type="term" value="C:cytoplasm"/>
    <property type="evidence" value="ECO:0007669"/>
    <property type="project" value="TreeGrafter"/>
</dbReference>
<dbReference type="GO" id="GO:0005525">
    <property type="term" value="F:GTP binding"/>
    <property type="evidence" value="ECO:0007669"/>
    <property type="project" value="UniProtKB-KW"/>
</dbReference>
<dbReference type="GO" id="GO:0003934">
    <property type="term" value="F:GTP cyclohydrolase I activity"/>
    <property type="evidence" value="ECO:0007669"/>
    <property type="project" value="UniProtKB-UniRule"/>
</dbReference>
<dbReference type="GO" id="GO:0008270">
    <property type="term" value="F:zinc ion binding"/>
    <property type="evidence" value="ECO:0007669"/>
    <property type="project" value="UniProtKB-UniRule"/>
</dbReference>
<dbReference type="GO" id="GO:0006730">
    <property type="term" value="P:one-carbon metabolic process"/>
    <property type="evidence" value="ECO:0007669"/>
    <property type="project" value="UniProtKB-UniRule"/>
</dbReference>
<dbReference type="GO" id="GO:0006729">
    <property type="term" value="P:tetrahydrobiopterin biosynthetic process"/>
    <property type="evidence" value="ECO:0007669"/>
    <property type="project" value="TreeGrafter"/>
</dbReference>
<dbReference type="GO" id="GO:0046654">
    <property type="term" value="P:tetrahydrofolate biosynthetic process"/>
    <property type="evidence" value="ECO:0007669"/>
    <property type="project" value="UniProtKB-UniRule"/>
</dbReference>
<dbReference type="FunFam" id="1.10.286.10:FF:000001">
    <property type="entry name" value="GTP cyclohydrolase 1"/>
    <property type="match status" value="1"/>
</dbReference>
<dbReference type="FunFam" id="3.30.1130.10:FF:000001">
    <property type="entry name" value="GTP cyclohydrolase 1"/>
    <property type="match status" value="1"/>
</dbReference>
<dbReference type="Gene3D" id="1.10.286.10">
    <property type="match status" value="1"/>
</dbReference>
<dbReference type="Gene3D" id="3.30.1130.10">
    <property type="match status" value="1"/>
</dbReference>
<dbReference type="HAMAP" id="MF_00223">
    <property type="entry name" value="FolE"/>
    <property type="match status" value="1"/>
</dbReference>
<dbReference type="InterPro" id="IPR043133">
    <property type="entry name" value="GTP-CH-I_C/QueF"/>
</dbReference>
<dbReference type="InterPro" id="IPR043134">
    <property type="entry name" value="GTP-CH-I_N"/>
</dbReference>
<dbReference type="InterPro" id="IPR001474">
    <property type="entry name" value="GTP_CycHdrlase_I"/>
</dbReference>
<dbReference type="InterPro" id="IPR018234">
    <property type="entry name" value="GTP_CycHdrlase_I_CS"/>
</dbReference>
<dbReference type="InterPro" id="IPR020602">
    <property type="entry name" value="GTP_CycHdrlase_I_dom"/>
</dbReference>
<dbReference type="NCBIfam" id="TIGR00063">
    <property type="entry name" value="folE"/>
    <property type="match status" value="1"/>
</dbReference>
<dbReference type="NCBIfam" id="NF006825">
    <property type="entry name" value="PRK09347.1-2"/>
    <property type="match status" value="1"/>
</dbReference>
<dbReference type="NCBIfam" id="NF006826">
    <property type="entry name" value="PRK09347.1-3"/>
    <property type="match status" value="1"/>
</dbReference>
<dbReference type="PANTHER" id="PTHR11109:SF7">
    <property type="entry name" value="GTP CYCLOHYDROLASE 1"/>
    <property type="match status" value="1"/>
</dbReference>
<dbReference type="PANTHER" id="PTHR11109">
    <property type="entry name" value="GTP CYCLOHYDROLASE I"/>
    <property type="match status" value="1"/>
</dbReference>
<dbReference type="Pfam" id="PF01227">
    <property type="entry name" value="GTP_cyclohydroI"/>
    <property type="match status" value="1"/>
</dbReference>
<dbReference type="SUPFAM" id="SSF55620">
    <property type="entry name" value="Tetrahydrobiopterin biosynthesis enzymes-like"/>
    <property type="match status" value="1"/>
</dbReference>
<dbReference type="PROSITE" id="PS00859">
    <property type="entry name" value="GTP_CYCLOHYDROL_1_1"/>
    <property type="match status" value="1"/>
</dbReference>
<dbReference type="PROSITE" id="PS00860">
    <property type="entry name" value="GTP_CYCLOHYDROL_1_2"/>
    <property type="match status" value="1"/>
</dbReference>
<accession>Q8PEP3</accession>
<protein>
    <recommendedName>
        <fullName evidence="2">GTP cyclohydrolase 1</fullName>
        <ecNumber evidence="2">3.5.4.16</ecNumber>
    </recommendedName>
    <alternativeName>
        <fullName evidence="2">GTP cyclohydrolase I</fullName>
        <shortName evidence="2">GTP-CH-I</shortName>
    </alternativeName>
</protein>
<proteinExistence type="inferred from homology"/>
<gene>
    <name evidence="2" type="primary">folE</name>
    <name type="ordered locus">XAC4302</name>
</gene>